<feature type="chain" id="PRO_0000122500" description="Alpha,alpha-trehalose-phosphate synthase [UDP-forming]">
    <location>
        <begin position="1"/>
        <end position="513"/>
    </location>
</feature>
<feature type="binding site" evidence="2">
    <location>
        <position position="104"/>
    </location>
    <ligand>
        <name>D-glucose 6-phosphate</name>
        <dbReference type="ChEBI" id="CHEBI:61548"/>
    </ligand>
</feature>
<feature type="binding site" evidence="2">
    <location>
        <position position="158"/>
    </location>
    <ligand>
        <name>D-glucose 6-phosphate</name>
        <dbReference type="ChEBI" id="CHEBI:61548"/>
    </ligand>
</feature>
<feature type="binding site" evidence="2">
    <location>
        <position position="294"/>
    </location>
    <ligand>
        <name>UDP</name>
        <dbReference type="ChEBI" id="CHEBI:58223"/>
    </ligand>
</feature>
<feature type="binding site" evidence="2">
    <location>
        <position position="294"/>
    </location>
    <ligand>
        <name>UDP-alpha-D-glucose</name>
        <dbReference type="ChEBI" id="CHEBI:58885"/>
    </ligand>
</feature>
<feature type="binding site" evidence="2">
    <location>
        <position position="299"/>
    </location>
    <ligand>
        <name>UDP</name>
        <dbReference type="ChEBI" id="CHEBI:58223"/>
    </ligand>
</feature>
<feature type="binding site" evidence="2">
    <location>
        <position position="299"/>
    </location>
    <ligand>
        <name>UDP-alpha-D-glucose</name>
        <dbReference type="ChEBI" id="CHEBI:58885"/>
    </ligand>
</feature>
<feature type="binding site" evidence="2">
    <location>
        <position position="332"/>
    </location>
    <ligand>
        <name>D-glucose 6-phosphate</name>
        <dbReference type="ChEBI" id="CHEBI:61548"/>
    </ligand>
</feature>
<feature type="binding site" evidence="2">
    <location>
        <begin position="393"/>
        <end position="401"/>
    </location>
    <ligand>
        <name>UDP-alpha-D-glucose</name>
        <dbReference type="ChEBI" id="CHEBI:58885"/>
    </ligand>
</feature>
<feature type="binding site" evidence="2">
    <location>
        <begin position="397"/>
        <end position="401"/>
    </location>
    <ligand>
        <name>UDP</name>
        <dbReference type="ChEBI" id="CHEBI:58223"/>
    </ligand>
</feature>
<feature type="modified residue" description="Phosphotyrosine" evidence="7">
    <location>
        <position position="40"/>
    </location>
</feature>
<feature type="modified residue" description="Phosphoserine" evidence="7">
    <location>
        <position position="503"/>
    </location>
</feature>
<feature type="sequence conflict" description="In Ref. 1; CAA82861." evidence="12" ref="1">
    <original>A</original>
    <variation>R</variation>
    <location>
        <position position="277"/>
    </location>
</feature>
<reference key="1">
    <citation type="journal article" date="1994" name="J. Bacteriol.">
        <title>Trehalose-6-P synthase is dispensable for growth on glucose but not for spore germination in Schizosaccharomyces pombe.</title>
        <authorList>
            <person name="Blazquez M.A."/>
            <person name="Stucka R."/>
            <person name="Feldmann H."/>
            <person name="Gancedo C."/>
        </authorList>
    </citation>
    <scope>NUCLEOTIDE SEQUENCE [GENOMIC DNA]</scope>
    <scope>FUNCTION</scope>
    <scope>INDUCTION</scope>
    <scope>DISRUPTION PHENOTYPE</scope>
</reference>
<reference key="2">
    <citation type="journal article" date="2002" name="Nature">
        <title>The genome sequence of Schizosaccharomyces pombe.</title>
        <authorList>
            <person name="Wood V."/>
            <person name="Gwilliam R."/>
            <person name="Rajandream M.A."/>
            <person name="Lyne M.H."/>
            <person name="Lyne R."/>
            <person name="Stewart A."/>
            <person name="Sgouros J.G."/>
            <person name="Peat N."/>
            <person name="Hayles J."/>
            <person name="Baker S.G."/>
            <person name="Basham D."/>
            <person name="Bowman S."/>
            <person name="Brooks K."/>
            <person name="Brown D."/>
            <person name="Brown S."/>
            <person name="Chillingworth T."/>
            <person name="Churcher C.M."/>
            <person name="Collins M."/>
            <person name="Connor R."/>
            <person name="Cronin A."/>
            <person name="Davis P."/>
            <person name="Feltwell T."/>
            <person name="Fraser A."/>
            <person name="Gentles S."/>
            <person name="Goble A."/>
            <person name="Hamlin N."/>
            <person name="Harris D.E."/>
            <person name="Hidalgo J."/>
            <person name="Hodgson G."/>
            <person name="Holroyd S."/>
            <person name="Hornsby T."/>
            <person name="Howarth S."/>
            <person name="Huckle E.J."/>
            <person name="Hunt S."/>
            <person name="Jagels K."/>
            <person name="James K.D."/>
            <person name="Jones L."/>
            <person name="Jones M."/>
            <person name="Leather S."/>
            <person name="McDonald S."/>
            <person name="McLean J."/>
            <person name="Mooney P."/>
            <person name="Moule S."/>
            <person name="Mungall K.L."/>
            <person name="Murphy L.D."/>
            <person name="Niblett D."/>
            <person name="Odell C."/>
            <person name="Oliver K."/>
            <person name="O'Neil S."/>
            <person name="Pearson D."/>
            <person name="Quail M.A."/>
            <person name="Rabbinowitsch E."/>
            <person name="Rutherford K.M."/>
            <person name="Rutter S."/>
            <person name="Saunders D."/>
            <person name="Seeger K."/>
            <person name="Sharp S."/>
            <person name="Skelton J."/>
            <person name="Simmonds M.N."/>
            <person name="Squares R."/>
            <person name="Squares S."/>
            <person name="Stevens K."/>
            <person name="Taylor K."/>
            <person name="Taylor R.G."/>
            <person name="Tivey A."/>
            <person name="Walsh S.V."/>
            <person name="Warren T."/>
            <person name="Whitehead S."/>
            <person name="Woodward J.R."/>
            <person name="Volckaert G."/>
            <person name="Aert R."/>
            <person name="Robben J."/>
            <person name="Grymonprez B."/>
            <person name="Weltjens I."/>
            <person name="Vanstreels E."/>
            <person name="Rieger M."/>
            <person name="Schaefer M."/>
            <person name="Mueller-Auer S."/>
            <person name="Gabel C."/>
            <person name="Fuchs M."/>
            <person name="Duesterhoeft A."/>
            <person name="Fritzc C."/>
            <person name="Holzer E."/>
            <person name="Moestl D."/>
            <person name="Hilbert H."/>
            <person name="Borzym K."/>
            <person name="Langer I."/>
            <person name="Beck A."/>
            <person name="Lehrach H."/>
            <person name="Reinhardt R."/>
            <person name="Pohl T.M."/>
            <person name="Eger P."/>
            <person name="Zimmermann W."/>
            <person name="Wedler H."/>
            <person name="Wambutt R."/>
            <person name="Purnelle B."/>
            <person name="Goffeau A."/>
            <person name="Cadieu E."/>
            <person name="Dreano S."/>
            <person name="Gloux S."/>
            <person name="Lelaure V."/>
            <person name="Mottier S."/>
            <person name="Galibert F."/>
            <person name="Aves S.J."/>
            <person name="Xiang Z."/>
            <person name="Hunt C."/>
            <person name="Moore K."/>
            <person name="Hurst S.M."/>
            <person name="Lucas M."/>
            <person name="Rochet M."/>
            <person name="Gaillardin C."/>
            <person name="Tallada V.A."/>
            <person name="Garzon A."/>
            <person name="Thode G."/>
            <person name="Daga R.R."/>
            <person name="Cruzado L."/>
            <person name="Jimenez J."/>
            <person name="Sanchez M."/>
            <person name="del Rey F."/>
            <person name="Benito J."/>
            <person name="Dominguez A."/>
            <person name="Revuelta J.L."/>
            <person name="Moreno S."/>
            <person name="Armstrong J."/>
            <person name="Forsburg S.L."/>
            <person name="Cerutti L."/>
            <person name="Lowe T."/>
            <person name="McCombie W.R."/>
            <person name="Paulsen I."/>
            <person name="Potashkin J."/>
            <person name="Shpakovski G.V."/>
            <person name="Ussery D."/>
            <person name="Barrell B.G."/>
            <person name="Nurse P."/>
        </authorList>
    </citation>
    <scope>NUCLEOTIDE SEQUENCE [LARGE SCALE GENOMIC DNA]</scope>
    <source>
        <strain>972 / ATCC 24843</strain>
    </source>
</reference>
<reference key="3">
    <citation type="journal article" date="1998" name="Biochim. Biophys. Acta">
        <title>Trehalose-6P synthase is essential for trehalase activation triggered by glucose, nitrogen source or heat shock, but not by osmostress, in Schizosaccharomyces pombe.</title>
        <authorList>
            <person name="Cansado J."/>
            <person name="Vicente-Soler J."/>
            <person name="Soto T."/>
            <person name="Fernandez J."/>
            <person name="Gacto M."/>
        </authorList>
    </citation>
    <scope>FUNCTION</scope>
    <scope>DISRUPTION PHENOTYPE</scope>
</reference>
<reference key="4">
    <citation type="journal article" date="1998" name="J. Bacteriol.">
        <title>Characterization of mutants devoid of neutral trehalase activity in the fission yeast Schizosaccharomyces pombe: partial protection from heat shock and high-salt stress.</title>
        <authorList>
            <person name="Cansado J."/>
            <person name="Soto T."/>
            <person name="Fernandez J."/>
            <person name="Vicente-Soler J."/>
            <person name="Gacto M."/>
        </authorList>
    </citation>
    <scope>FUNCTION</scope>
    <scope>DISRUPTION PHENOTYPE</scope>
</reference>
<reference key="5">
    <citation type="journal article" date="2002" name="Eur. J. Biochem.">
        <title>Molecular interaction of neutral trehalase with other enzymes of trehalose metabolism in the fission yeast Schizosaccharomyces pombe.</title>
        <authorList>
            <person name="Soto T."/>
            <person name="Franco A."/>
            <person name="Padmanabhan S."/>
            <person name="Vicente-Soler J."/>
            <person name="Cansado J."/>
            <person name="Gacto M."/>
        </authorList>
    </citation>
    <scope>IDENTIFICATION IN THE TREHALOSE SYNTHASE COMPLEX</scope>
    <scope>INTERACTION WITH NTP1 AND TPP1</scope>
</reference>
<reference key="6">
    <citation type="journal article" date="2003" name="Biochem. J.">
        <title>A role for calcium in the regulation of neutral trehalase activity in the fission yeast Schizosaccharomyces pombe.</title>
        <authorList>
            <person name="Franco A."/>
            <person name="Soto T."/>
            <person name="Vicente-Soler J."/>
            <person name="Paredes V."/>
            <person name="Madrid M."/>
            <person name="Gacto M."/>
            <person name="Cansado J."/>
        </authorList>
    </citation>
    <scope>INTERACTION WITH NTP1</scope>
</reference>
<reference key="7">
    <citation type="journal article" date="2005" name="Arch. Microbiol.">
        <title>Functional characterization of Schizosaccharomyces pombe neutral trehalase altered in phosphorylatable serine residues.</title>
        <authorList>
            <person name="Franco A."/>
            <person name="Soto T."/>
            <person name="Madrid M."/>
            <person name="Vicente-Soler J."/>
            <person name="Gacto M."/>
            <person name="Cansado J."/>
        </authorList>
    </citation>
    <scope>INTERACTION WITH NTP1</scope>
</reference>
<reference key="8">
    <citation type="journal article" date="2006" name="Nat. Biotechnol.">
        <title>ORFeome cloning and global analysis of protein localization in the fission yeast Schizosaccharomyces pombe.</title>
        <authorList>
            <person name="Matsuyama A."/>
            <person name="Arai R."/>
            <person name="Yashiroda Y."/>
            <person name="Shirai A."/>
            <person name="Kamata A."/>
            <person name="Sekido S."/>
            <person name="Kobayashi Y."/>
            <person name="Hashimoto A."/>
            <person name="Hamamoto M."/>
            <person name="Hiraoka Y."/>
            <person name="Horinouchi S."/>
            <person name="Yoshida M."/>
        </authorList>
    </citation>
    <scope>SUBCELLULAR LOCATION [LARGE SCALE ANALYSIS]</scope>
</reference>
<reference key="9">
    <citation type="journal article" date="2008" name="J. Proteome Res.">
        <title>Phosphoproteome analysis of fission yeast.</title>
        <authorList>
            <person name="Wilson-Grady J.T."/>
            <person name="Villen J."/>
            <person name="Gygi S.P."/>
        </authorList>
    </citation>
    <scope>PHOSPHORYLATION [LARGE SCALE ANALYSIS] AT TYR-40 AND SER-503</scope>
    <scope>IDENTIFICATION BY MASS SPECTROMETRY</scope>
</reference>
<comment type="function">
    <text evidence="8 9 10">Synthase catalytic subunit of the trehalose synthase complex that catalyzes the production of trehalose from glucose-6-phosphate and UDP-alpha-D-glucose in a two step process (PubMed:8021171). The disaccharide trehalose serves as a storage carbohydrate that is mobilized during nutrient stress and spore germination (PubMed:8021171, PubMed:9729425). Together with ntp1, regulates the level of trehalose as a protectant for cell integrity during thermal and osmotic stress (PubMed:8021171, PubMed:9495778).</text>
</comment>
<comment type="catalytic activity">
    <reaction evidence="1">
        <text>D-glucose 6-phosphate + UDP-alpha-D-glucose = alpha,alpha-trehalose 6-phosphate + UDP + H(+)</text>
        <dbReference type="Rhea" id="RHEA:18889"/>
        <dbReference type="ChEBI" id="CHEBI:15378"/>
        <dbReference type="ChEBI" id="CHEBI:58223"/>
        <dbReference type="ChEBI" id="CHEBI:58429"/>
        <dbReference type="ChEBI" id="CHEBI:58885"/>
        <dbReference type="ChEBI" id="CHEBI:61548"/>
        <dbReference type="EC" id="2.4.1.15"/>
    </reaction>
</comment>
<comment type="pathway">
    <text evidence="12">Carbohydrate biosynthesis.</text>
</comment>
<comment type="subunit">
    <text evidence="3 4 5">Homomer (PubMed:12153582). Component of the trehalose synthase complex that contains at least tps1, ntp1 and tpp1 (PubMed:12153582). Interacts with tpp1 (PubMed:12153582). Interacts with ntp1; the interaction is independent of stress conditions (PubMed:12153582, PubMed:12943532, PubMed:15965643).</text>
</comment>
<comment type="interaction">
    <interactant intactId="EBI-26616873">
        <id>P40387</id>
    </interactant>
    <interactant intactId="EBI-26616855">
        <id>O42893</id>
        <label>ntp1</label>
    </interactant>
    <organismsDiffer>false</organismsDiffer>
    <experiments>3</experiments>
</comment>
<comment type="interaction">
    <interactant intactId="EBI-26616873">
        <id>P40387</id>
    </interactant>
    <interactant intactId="EBI-26616958">
        <id>P78875</id>
        <label>tpp1</label>
    </interactant>
    <organismsDiffer>false</organismsDiffer>
    <experiments>2</experiments>
</comment>
<comment type="subcellular location">
    <subcellularLocation>
        <location evidence="6">Cytoplasm</location>
    </subcellularLocation>
    <subcellularLocation>
        <location evidence="6">Nucleus</location>
    </subcellularLocation>
</comment>
<comment type="induction">
    <text evidence="8">By thermal stress.</text>
</comment>
<comment type="disruption phenotype">
    <text evidence="8 9 10">Abolishes cytoplasmic neutral trehalase activation during thermal stress; activation during osmotic stress is normal (PubMed:9729425). Decreases cellular trehalose 6-phosphate level in stationary phase and during thermal stress (PubMed:8021171). Sensitive to heat shock and osmotic stress (PubMed:9495778).</text>
</comment>
<comment type="similarity">
    <text evidence="12">Belongs to the glycosyltransferase 20 family.</text>
</comment>
<comment type="sequence caution" evidence="12">
    <conflict type="frameshift">
        <sequence resource="EMBL-CDS" id="CAA82861"/>
    </conflict>
</comment>
<proteinExistence type="evidence at protein level"/>
<name>TPS1_SCHPO</name>
<dbReference type="EC" id="2.4.1.15" evidence="1"/>
<dbReference type="EMBL" id="Z29971">
    <property type="protein sequence ID" value="CAA82861.1"/>
    <property type="status" value="ALT_FRAME"/>
    <property type="molecule type" value="Genomic_DNA"/>
</dbReference>
<dbReference type="EMBL" id="CU329670">
    <property type="protein sequence ID" value="CAB95998.1"/>
    <property type="molecule type" value="Genomic_DNA"/>
</dbReference>
<dbReference type="PIR" id="T46564">
    <property type="entry name" value="T46564"/>
</dbReference>
<dbReference type="RefSeq" id="NP_594205.1">
    <property type="nucleotide sequence ID" value="NM_001019628.2"/>
</dbReference>
<dbReference type="SMR" id="P40387"/>
<dbReference type="BioGRID" id="279113">
    <property type="interactions" value="98"/>
</dbReference>
<dbReference type="ComplexPortal" id="CPX-6423">
    <property type="entry name" value="Trehalose-6-phosphate synthase/phosphatase complex"/>
</dbReference>
<dbReference type="FunCoup" id="P40387">
    <property type="interactions" value="102"/>
</dbReference>
<dbReference type="IntAct" id="P40387">
    <property type="interactions" value="2"/>
</dbReference>
<dbReference type="STRING" id="284812.P40387"/>
<dbReference type="CAZy" id="GT20">
    <property type="family name" value="Glycosyltransferase Family 20"/>
</dbReference>
<dbReference type="iPTMnet" id="P40387"/>
<dbReference type="PaxDb" id="4896-SPAC328.03.1"/>
<dbReference type="EnsemblFungi" id="SPAC328.03.1">
    <property type="protein sequence ID" value="SPAC328.03.1:pep"/>
    <property type="gene ID" value="SPAC328.03"/>
</dbReference>
<dbReference type="GeneID" id="2542660"/>
<dbReference type="KEGG" id="spo:2542660"/>
<dbReference type="PomBase" id="SPAC328.03">
    <property type="gene designation" value="tps1"/>
</dbReference>
<dbReference type="VEuPathDB" id="FungiDB:SPAC328.03"/>
<dbReference type="eggNOG" id="KOG1050">
    <property type="taxonomic scope" value="Eukaryota"/>
</dbReference>
<dbReference type="HOGENOM" id="CLU_002351_7_2_1"/>
<dbReference type="InParanoid" id="P40387"/>
<dbReference type="OMA" id="NRTIWPL"/>
<dbReference type="PhylomeDB" id="P40387"/>
<dbReference type="PRO" id="PR:P40387"/>
<dbReference type="Proteomes" id="UP000002485">
    <property type="component" value="Chromosome I"/>
</dbReference>
<dbReference type="GO" id="GO:0005946">
    <property type="term" value="C:alpha,alpha-trehalose-phosphate synthase complex (UDP-forming)"/>
    <property type="evidence" value="ECO:0000314"/>
    <property type="project" value="PomBase"/>
</dbReference>
<dbReference type="GO" id="GO:0005829">
    <property type="term" value="C:cytosol"/>
    <property type="evidence" value="ECO:0007005"/>
    <property type="project" value="PomBase"/>
</dbReference>
<dbReference type="GO" id="GO:0005634">
    <property type="term" value="C:nucleus"/>
    <property type="evidence" value="ECO:0007669"/>
    <property type="project" value="UniProtKB-SubCell"/>
</dbReference>
<dbReference type="GO" id="GO:0003825">
    <property type="term" value="F:alpha,alpha-trehalose-phosphate synthase (UDP-forming) activity"/>
    <property type="evidence" value="ECO:0000315"/>
    <property type="project" value="PomBase"/>
</dbReference>
<dbReference type="GO" id="GO:0030437">
    <property type="term" value="P:ascospore formation"/>
    <property type="evidence" value="ECO:0000304"/>
    <property type="project" value="PomBase"/>
</dbReference>
<dbReference type="GO" id="GO:0034605">
    <property type="term" value="P:cellular response to heat"/>
    <property type="evidence" value="ECO:0000318"/>
    <property type="project" value="GO_Central"/>
</dbReference>
<dbReference type="GO" id="GO:0005992">
    <property type="term" value="P:trehalose biosynthetic process"/>
    <property type="evidence" value="ECO:0000315"/>
    <property type="project" value="PomBase"/>
</dbReference>
<dbReference type="GO" id="GO:0005991">
    <property type="term" value="P:trehalose metabolic process"/>
    <property type="evidence" value="ECO:0000314"/>
    <property type="project" value="ComplexPortal"/>
</dbReference>
<dbReference type="CDD" id="cd03788">
    <property type="entry name" value="GT20_TPS"/>
    <property type="match status" value="1"/>
</dbReference>
<dbReference type="FunFam" id="3.40.50.2000:FF:000007">
    <property type="entry name" value="Trehalose-6-phosphate synthase"/>
    <property type="match status" value="1"/>
</dbReference>
<dbReference type="FunFam" id="3.40.50.2000:FF:000035">
    <property type="entry name" value="Trehalose-6-phosphate synthase"/>
    <property type="match status" value="1"/>
</dbReference>
<dbReference type="Gene3D" id="3.40.50.2000">
    <property type="entry name" value="Glycogen Phosphorylase B"/>
    <property type="match status" value="2"/>
</dbReference>
<dbReference type="InterPro" id="IPR001830">
    <property type="entry name" value="Glyco_trans_20"/>
</dbReference>
<dbReference type="InterPro" id="IPR012766">
    <property type="entry name" value="Trehalose_OtsA"/>
</dbReference>
<dbReference type="NCBIfam" id="TIGR02400">
    <property type="entry name" value="trehalose_OtsA"/>
    <property type="match status" value="1"/>
</dbReference>
<dbReference type="PANTHER" id="PTHR10788:SF106">
    <property type="entry name" value="BCDNA.GH08860"/>
    <property type="match status" value="1"/>
</dbReference>
<dbReference type="PANTHER" id="PTHR10788">
    <property type="entry name" value="TREHALOSE-6-PHOSPHATE SYNTHASE"/>
    <property type="match status" value="1"/>
</dbReference>
<dbReference type="Pfam" id="PF00982">
    <property type="entry name" value="Glyco_transf_20"/>
    <property type="match status" value="1"/>
</dbReference>
<dbReference type="SUPFAM" id="SSF53756">
    <property type="entry name" value="UDP-Glycosyltransferase/glycogen phosphorylase"/>
    <property type="match status" value="1"/>
</dbReference>
<gene>
    <name evidence="11" type="primary">tps1</name>
    <name evidence="13" type="ORF">SPAC328.03</name>
</gene>
<evidence type="ECO:0000250" key="1">
    <source>
        <dbReference type="UniProtKB" id="Q00764"/>
    </source>
</evidence>
<evidence type="ECO:0000250" key="2">
    <source>
        <dbReference type="UniProtKB" id="Q92410"/>
    </source>
</evidence>
<evidence type="ECO:0000269" key="3">
    <source>
    </source>
</evidence>
<evidence type="ECO:0000269" key="4">
    <source>
    </source>
</evidence>
<evidence type="ECO:0000269" key="5">
    <source>
    </source>
</evidence>
<evidence type="ECO:0000269" key="6">
    <source>
    </source>
</evidence>
<evidence type="ECO:0000269" key="7">
    <source>
    </source>
</evidence>
<evidence type="ECO:0000269" key="8">
    <source>
    </source>
</evidence>
<evidence type="ECO:0000269" key="9">
    <source>
    </source>
</evidence>
<evidence type="ECO:0000269" key="10">
    <source>
    </source>
</evidence>
<evidence type="ECO:0000303" key="11">
    <source>
    </source>
</evidence>
<evidence type="ECO:0000305" key="12"/>
<evidence type="ECO:0000312" key="13">
    <source>
        <dbReference type="PomBase" id="SPAC328.03"/>
    </source>
</evidence>
<keyword id="KW-0963">Cytoplasm</keyword>
<keyword id="KW-0328">Glycosyltransferase</keyword>
<keyword id="KW-0539">Nucleus</keyword>
<keyword id="KW-0597">Phosphoprotein</keyword>
<keyword id="KW-1185">Reference proteome</keyword>
<keyword id="KW-0346">Stress response</keyword>
<keyword id="KW-0808">Transferase</keyword>
<sequence length="513" mass="58493">MSDAHDTIKSLTGDASNSRRLIVVSNRLPITIKRKDNGTYDFSMSSGGLVSALSGLKKLMTFQWLGWCGQEIPEDEKPMIIQRLQDECSAIPVFLDDETADRHYNGFSNSILWPLFHYHPGEINFDEENWEAYRAANYAFAEAIVKNLQDGDLIWVQDYHLMVLPQMLRELIGDKFKDIKIGFFLHTPFPSSEIYRVLPVRNEILEGVLNCDLVGFHTYDYARHFLSACSRILNLSTLPNGVEYNGQMVSVGTFPIGIDPEKFSDALKSDVVKDRIASIERRLQGVKVIVGVDRLDYIKGVPQKFHAFEVFLEQYPEWVGKVVLVQVAVPSRQDVEEYQNLRAVVNELVGRINGRFGTVEYTPIHFLHKSVRFEELVALYNVSDVCLITSTRDGMNLVSYEYICTQQERHGALILSEFAGAAQSLNGSIVINPWNTEELANSIHDALTMPEKQREANENKLFRYVNKYTSQFWGQSFVGELQRIQHYSHPHPRRTNPILRTKSAQVLSMNSSS</sequence>
<organism>
    <name type="scientific">Schizosaccharomyces pombe (strain 972 / ATCC 24843)</name>
    <name type="common">Fission yeast</name>
    <dbReference type="NCBI Taxonomy" id="284812"/>
    <lineage>
        <taxon>Eukaryota</taxon>
        <taxon>Fungi</taxon>
        <taxon>Dikarya</taxon>
        <taxon>Ascomycota</taxon>
        <taxon>Taphrinomycotina</taxon>
        <taxon>Schizosaccharomycetes</taxon>
        <taxon>Schizosaccharomycetales</taxon>
        <taxon>Schizosaccharomycetaceae</taxon>
        <taxon>Schizosaccharomyces</taxon>
    </lineage>
</organism>
<accession>P40387</accession>
<accession>Q9P3U3</accession>
<protein>
    <recommendedName>
        <fullName>Alpha,alpha-trehalose-phosphate synthase [UDP-forming]</fullName>
        <ecNumber evidence="1">2.4.1.15</ecNumber>
    </recommendedName>
    <alternativeName>
        <fullName>Trehalose-6-phosphate synthase</fullName>
    </alternativeName>
    <alternativeName>
        <fullName>UDP-glucose-glucosephosphate glucosyltransferase</fullName>
    </alternativeName>
</protein>